<proteinExistence type="inferred from homology"/>
<organism>
    <name type="scientific">Pseudomonas paraeruginosa (strain DSM 24068 / PA7)</name>
    <name type="common">Pseudomonas aeruginosa (strain PA7)</name>
    <dbReference type="NCBI Taxonomy" id="381754"/>
    <lineage>
        <taxon>Bacteria</taxon>
        <taxon>Pseudomonadati</taxon>
        <taxon>Pseudomonadota</taxon>
        <taxon>Gammaproteobacteria</taxon>
        <taxon>Pseudomonadales</taxon>
        <taxon>Pseudomonadaceae</taxon>
        <taxon>Pseudomonas</taxon>
        <taxon>Pseudomonas paraeruginosa</taxon>
    </lineage>
</organism>
<keyword id="KW-0012">Acyltransferase</keyword>
<keyword id="KW-0997">Cell inner membrane</keyword>
<keyword id="KW-1003">Cell membrane</keyword>
<keyword id="KW-0444">Lipid biosynthesis</keyword>
<keyword id="KW-0443">Lipid metabolism</keyword>
<keyword id="KW-0472">Membrane</keyword>
<keyword id="KW-0594">Phospholipid biosynthesis</keyword>
<keyword id="KW-1208">Phospholipid metabolism</keyword>
<keyword id="KW-0808">Transferase</keyword>
<comment type="catalytic activity">
    <reaction evidence="1">
        <text>sn-glycerol 3-phosphate + an acyl-CoA = a 1-acyl-sn-glycero-3-phosphate + CoA</text>
        <dbReference type="Rhea" id="RHEA:15325"/>
        <dbReference type="ChEBI" id="CHEBI:57287"/>
        <dbReference type="ChEBI" id="CHEBI:57597"/>
        <dbReference type="ChEBI" id="CHEBI:57970"/>
        <dbReference type="ChEBI" id="CHEBI:58342"/>
        <dbReference type="EC" id="2.3.1.15"/>
    </reaction>
</comment>
<comment type="pathway">
    <text evidence="1">Phospholipid metabolism; CDP-diacylglycerol biosynthesis; CDP-diacylglycerol from sn-glycerol 3-phosphate: step 1/3.</text>
</comment>
<comment type="subcellular location">
    <subcellularLocation>
        <location evidence="1">Cell inner membrane</location>
        <topology evidence="1">Peripheral membrane protein</topology>
        <orientation evidence="1">Cytoplasmic side</orientation>
    </subcellularLocation>
</comment>
<comment type="domain">
    <text evidence="1">The HXXXXD motif is essential for acyltransferase activity and may constitute the binding site for the phosphate moiety of the glycerol-3-phosphate.</text>
</comment>
<comment type="similarity">
    <text evidence="1">Belongs to the GPAT/DAPAT family.</text>
</comment>
<evidence type="ECO:0000255" key="1">
    <source>
        <dbReference type="HAMAP-Rule" id="MF_00393"/>
    </source>
</evidence>
<name>PLSB_PSEP7</name>
<dbReference type="EC" id="2.3.1.15" evidence="1"/>
<dbReference type="EMBL" id="CP000744">
    <property type="protein sequence ID" value="ABR84229.1"/>
    <property type="molecule type" value="Genomic_DNA"/>
</dbReference>
<dbReference type="RefSeq" id="WP_012074680.1">
    <property type="nucleotide sequence ID" value="NC_009656.1"/>
</dbReference>
<dbReference type="SMR" id="A6V1B5"/>
<dbReference type="KEGG" id="pap:PSPA7_1466"/>
<dbReference type="HOGENOM" id="CLU_015407_0_0_6"/>
<dbReference type="UniPathway" id="UPA00557">
    <property type="reaction ID" value="UER00612"/>
</dbReference>
<dbReference type="Proteomes" id="UP000001582">
    <property type="component" value="Chromosome"/>
</dbReference>
<dbReference type="GO" id="GO:0005886">
    <property type="term" value="C:plasma membrane"/>
    <property type="evidence" value="ECO:0007669"/>
    <property type="project" value="UniProtKB-SubCell"/>
</dbReference>
<dbReference type="GO" id="GO:0004366">
    <property type="term" value="F:glycerol-3-phosphate O-acyltransferase activity"/>
    <property type="evidence" value="ECO:0007669"/>
    <property type="project" value="UniProtKB-UniRule"/>
</dbReference>
<dbReference type="GO" id="GO:0016024">
    <property type="term" value="P:CDP-diacylglycerol biosynthetic process"/>
    <property type="evidence" value="ECO:0007669"/>
    <property type="project" value="UniProtKB-UniRule"/>
</dbReference>
<dbReference type="GO" id="GO:0006631">
    <property type="term" value="P:fatty acid metabolic process"/>
    <property type="evidence" value="ECO:0007669"/>
    <property type="project" value="TreeGrafter"/>
</dbReference>
<dbReference type="CDD" id="cd07993">
    <property type="entry name" value="LPLAT_DHAPAT-like"/>
    <property type="match status" value="1"/>
</dbReference>
<dbReference type="HAMAP" id="MF_00393">
    <property type="entry name" value="Glyc3P_acyltrans"/>
    <property type="match status" value="1"/>
</dbReference>
<dbReference type="InterPro" id="IPR022284">
    <property type="entry name" value="GPAT/DHAPAT"/>
</dbReference>
<dbReference type="InterPro" id="IPR045520">
    <property type="entry name" value="GPAT/DHAPAT_C"/>
</dbReference>
<dbReference type="InterPro" id="IPR041728">
    <property type="entry name" value="GPAT/DHAPAT_LPLAT"/>
</dbReference>
<dbReference type="InterPro" id="IPR028354">
    <property type="entry name" value="GPAT_PlsB"/>
</dbReference>
<dbReference type="InterPro" id="IPR002123">
    <property type="entry name" value="Plipid/glycerol_acylTrfase"/>
</dbReference>
<dbReference type="NCBIfam" id="TIGR03703">
    <property type="entry name" value="plsB"/>
    <property type="match status" value="1"/>
</dbReference>
<dbReference type="NCBIfam" id="NF003441">
    <property type="entry name" value="PRK04974.1"/>
    <property type="match status" value="1"/>
</dbReference>
<dbReference type="PANTHER" id="PTHR12563:SF17">
    <property type="entry name" value="DIHYDROXYACETONE PHOSPHATE ACYLTRANSFERASE"/>
    <property type="match status" value="1"/>
</dbReference>
<dbReference type="PANTHER" id="PTHR12563">
    <property type="entry name" value="GLYCEROL-3-PHOSPHATE ACYLTRANSFERASE"/>
    <property type="match status" value="1"/>
</dbReference>
<dbReference type="Pfam" id="PF01553">
    <property type="entry name" value="Acyltransferase"/>
    <property type="match status" value="1"/>
</dbReference>
<dbReference type="Pfam" id="PF19277">
    <property type="entry name" value="GPAT_C"/>
    <property type="match status" value="1"/>
</dbReference>
<dbReference type="PIRSF" id="PIRSF500064">
    <property type="entry name" value="GPAT"/>
    <property type="match status" value="1"/>
</dbReference>
<dbReference type="PIRSF" id="PIRSF000437">
    <property type="entry name" value="GPAT_DHAPAT"/>
    <property type="match status" value="1"/>
</dbReference>
<dbReference type="SMART" id="SM00563">
    <property type="entry name" value="PlsC"/>
    <property type="match status" value="1"/>
</dbReference>
<dbReference type="SUPFAM" id="SSF69593">
    <property type="entry name" value="Glycerol-3-phosphate (1)-acyltransferase"/>
    <property type="match status" value="1"/>
</dbReference>
<protein>
    <recommendedName>
        <fullName evidence="1">Glycerol-3-phosphate acyltransferase</fullName>
        <shortName evidence="1">GPAT</shortName>
        <ecNumber evidence="1">2.3.1.15</ecNumber>
    </recommendedName>
</protein>
<sequence length="834" mass="94818">MPRYPFRRFGFGALRRLLYLWVRSETINQSAFTLKIDRSKPVLYVLQQPSVSDLAVVDTECRKAGLPRPVMPVAVGDAIEPAAFFYLTPEPDWLGRQDKRGASPTLVRMLAAVGQNGLDDAQIIPVSVFWGQSPDSESSPWKLLFADNWAVTGRLRKLARILILGRKTRVQFSAPIHLRELVEQGKGHERTLRMVNRILRVHFRNLKTAVIGPDLSHRRNLVKGLLRAPLVRQAISEECESERISQEKAEGIALRYANEIASDFSYPVIRFLEVILSWFWNKLYEGVKVNHIERVQDVAQGNEIVYVPCHRSHIDYLLLSYLLFRNGLTPPHIAAGINLNMPVIGSILRRGGAFFMRRSFKGNQLYTAVFNEYLHTLFSRGFSTEYFVEGGRSRTGRMLHPRTGMLAITLRSFLRDSRRPIVFVPVYIGYERVLEGRTYLGELRGATKKKESIFDLFKVVGALKQRFGQVWVNFGEPIHLDQFLDRHQPDWQDQDLGPEYRPDWLPQTTNLLAKDVARHLNDAAAINPVNLVALALLSTSRQALDESALARILDLYLALLRQVPYSPSATLPDGDGQALIEYVKSMNLLAEQKDALGRILYLDEQNAVLATYYRNNVLHVFALPALIASFFQSNSRISREQLLRFARALYPYLQAELFIRWSLDELDAVIDQWLAALVEQGLLRQENDTFIRPAPSSRQYVLLILLARSVTQTLQRFYMAIALLLNAGQNALTAEELENLCTVMAQRLSILHGLNAPEFFDKSLFRHFIQTLLDLRVLRKDETGKLSYHELLGELAEGAAKRVLPAEIRLSIRQVALERPAEEAAAESNDAATN</sequence>
<feature type="chain" id="PRO_1000049442" description="Glycerol-3-phosphate acyltransferase">
    <location>
        <begin position="1"/>
        <end position="834"/>
    </location>
</feature>
<feature type="short sequence motif" description="HXXXXD motif">
    <location>
        <begin position="309"/>
        <end position="314"/>
    </location>
</feature>
<accession>A6V1B5</accession>
<reference key="1">
    <citation type="submission" date="2007-06" db="EMBL/GenBank/DDBJ databases">
        <authorList>
            <person name="Dodson R.J."/>
            <person name="Harkins D."/>
            <person name="Paulsen I.T."/>
        </authorList>
    </citation>
    <scope>NUCLEOTIDE SEQUENCE [LARGE SCALE GENOMIC DNA]</scope>
    <source>
        <strain>DSM 24068 / PA7</strain>
    </source>
</reference>
<gene>
    <name evidence="1" type="primary">plsB</name>
    <name type="ordered locus">PSPA7_1466</name>
</gene>